<feature type="chain" id="PRO_0000282811" description="Ribosomal RNA large subunit methyltransferase E">
    <location>
        <begin position="1"/>
        <end position="242"/>
    </location>
</feature>
<feature type="region of interest" description="Disordered" evidence="2">
    <location>
        <begin position="198"/>
        <end position="242"/>
    </location>
</feature>
<feature type="compositionally biased region" description="Polar residues" evidence="2">
    <location>
        <begin position="233"/>
        <end position="242"/>
    </location>
</feature>
<feature type="active site" description="Proton acceptor" evidence="1">
    <location>
        <position position="165"/>
    </location>
</feature>
<feature type="binding site" evidence="1">
    <location>
        <position position="64"/>
    </location>
    <ligand>
        <name>S-adenosyl-L-methionine</name>
        <dbReference type="ChEBI" id="CHEBI:59789"/>
    </ligand>
</feature>
<feature type="binding site" evidence="1">
    <location>
        <position position="66"/>
    </location>
    <ligand>
        <name>S-adenosyl-L-methionine</name>
        <dbReference type="ChEBI" id="CHEBI:59789"/>
    </ligand>
</feature>
<feature type="binding site" evidence="1">
    <location>
        <position position="84"/>
    </location>
    <ligand>
        <name>S-adenosyl-L-methionine</name>
        <dbReference type="ChEBI" id="CHEBI:59789"/>
    </ligand>
</feature>
<feature type="binding site" evidence="1">
    <location>
        <position position="100"/>
    </location>
    <ligand>
        <name>S-adenosyl-L-methionine</name>
        <dbReference type="ChEBI" id="CHEBI:59789"/>
    </ligand>
</feature>
<feature type="binding site" evidence="1">
    <location>
        <position position="125"/>
    </location>
    <ligand>
        <name>S-adenosyl-L-methionine</name>
        <dbReference type="ChEBI" id="CHEBI:59789"/>
    </ligand>
</feature>
<comment type="function">
    <text evidence="1">Specifically methylates the uridine in position 2552 of 23S rRNA at the 2'-O position of the ribose in the fully assembled 50S ribosomal subunit.</text>
</comment>
<comment type="catalytic activity">
    <reaction evidence="1">
        <text>uridine(2552) in 23S rRNA + S-adenosyl-L-methionine = 2'-O-methyluridine(2552) in 23S rRNA + S-adenosyl-L-homocysteine + H(+)</text>
        <dbReference type="Rhea" id="RHEA:42720"/>
        <dbReference type="Rhea" id="RHEA-COMP:10202"/>
        <dbReference type="Rhea" id="RHEA-COMP:10203"/>
        <dbReference type="ChEBI" id="CHEBI:15378"/>
        <dbReference type="ChEBI" id="CHEBI:57856"/>
        <dbReference type="ChEBI" id="CHEBI:59789"/>
        <dbReference type="ChEBI" id="CHEBI:65315"/>
        <dbReference type="ChEBI" id="CHEBI:74478"/>
        <dbReference type="EC" id="2.1.1.166"/>
    </reaction>
</comment>
<comment type="subcellular location">
    <subcellularLocation>
        <location evidence="1">Cytoplasm</location>
    </subcellularLocation>
</comment>
<comment type="similarity">
    <text evidence="1">Belongs to the class I-like SAM-binding methyltransferase superfamily. RNA methyltransferase RlmE family.</text>
</comment>
<dbReference type="EC" id="2.1.1.166" evidence="1"/>
<dbReference type="EMBL" id="CP000542">
    <property type="protein sequence ID" value="ABM56004.1"/>
    <property type="molecule type" value="Genomic_DNA"/>
</dbReference>
<dbReference type="RefSeq" id="WP_011808023.1">
    <property type="nucleotide sequence ID" value="NC_008786.1"/>
</dbReference>
<dbReference type="SMR" id="A1WEE7"/>
<dbReference type="STRING" id="391735.Veis_0212"/>
<dbReference type="GeneID" id="76458958"/>
<dbReference type="KEGG" id="vei:Veis_0212"/>
<dbReference type="eggNOG" id="COG0293">
    <property type="taxonomic scope" value="Bacteria"/>
</dbReference>
<dbReference type="HOGENOM" id="CLU_009422_4_1_4"/>
<dbReference type="OrthoDB" id="9790080at2"/>
<dbReference type="Proteomes" id="UP000000374">
    <property type="component" value="Chromosome"/>
</dbReference>
<dbReference type="GO" id="GO:0005737">
    <property type="term" value="C:cytoplasm"/>
    <property type="evidence" value="ECO:0007669"/>
    <property type="project" value="UniProtKB-SubCell"/>
</dbReference>
<dbReference type="GO" id="GO:0008650">
    <property type="term" value="F:rRNA (uridine-2'-O-)-methyltransferase activity"/>
    <property type="evidence" value="ECO:0007669"/>
    <property type="project" value="UniProtKB-UniRule"/>
</dbReference>
<dbReference type="CDD" id="cd02440">
    <property type="entry name" value="AdoMet_MTases"/>
    <property type="match status" value="1"/>
</dbReference>
<dbReference type="Gene3D" id="3.40.50.150">
    <property type="entry name" value="Vaccinia Virus protein VP39"/>
    <property type="match status" value="1"/>
</dbReference>
<dbReference type="HAMAP" id="MF_01547">
    <property type="entry name" value="RNA_methyltr_E"/>
    <property type="match status" value="1"/>
</dbReference>
<dbReference type="InterPro" id="IPR050082">
    <property type="entry name" value="RNA_methyltr_RlmE"/>
</dbReference>
<dbReference type="InterPro" id="IPR002877">
    <property type="entry name" value="RNA_MeTrfase_FtsJ_dom"/>
</dbReference>
<dbReference type="InterPro" id="IPR015507">
    <property type="entry name" value="rRNA-MeTfrase_E"/>
</dbReference>
<dbReference type="InterPro" id="IPR029063">
    <property type="entry name" value="SAM-dependent_MTases_sf"/>
</dbReference>
<dbReference type="PANTHER" id="PTHR10920">
    <property type="entry name" value="RIBOSOMAL RNA METHYLTRANSFERASE"/>
    <property type="match status" value="1"/>
</dbReference>
<dbReference type="PANTHER" id="PTHR10920:SF18">
    <property type="entry name" value="RRNA METHYLTRANSFERASE 2, MITOCHONDRIAL"/>
    <property type="match status" value="1"/>
</dbReference>
<dbReference type="Pfam" id="PF01728">
    <property type="entry name" value="FtsJ"/>
    <property type="match status" value="1"/>
</dbReference>
<dbReference type="PIRSF" id="PIRSF005461">
    <property type="entry name" value="23S_rRNA_mtase"/>
    <property type="match status" value="1"/>
</dbReference>
<dbReference type="SUPFAM" id="SSF53335">
    <property type="entry name" value="S-adenosyl-L-methionine-dependent methyltransferases"/>
    <property type="match status" value="1"/>
</dbReference>
<accession>A1WEE7</accession>
<proteinExistence type="inferred from homology"/>
<gene>
    <name evidence="1" type="primary">rlmE</name>
    <name evidence="1" type="synonym">ftsJ</name>
    <name evidence="1" type="synonym">rrmJ</name>
    <name type="ordered locus">Veis_0212</name>
</gene>
<protein>
    <recommendedName>
        <fullName evidence="1">Ribosomal RNA large subunit methyltransferase E</fullName>
        <ecNumber evidence="1">2.1.1.166</ecNumber>
    </recommendedName>
    <alternativeName>
        <fullName evidence="1">23S rRNA Um2552 methyltransferase</fullName>
    </alternativeName>
    <alternativeName>
        <fullName evidence="1">rRNA (uridine-2'-O-)-methyltransferase</fullName>
    </alternativeName>
</protein>
<organism>
    <name type="scientific">Verminephrobacter eiseniae (strain EF01-2)</name>
    <dbReference type="NCBI Taxonomy" id="391735"/>
    <lineage>
        <taxon>Bacteria</taxon>
        <taxon>Pseudomonadati</taxon>
        <taxon>Pseudomonadota</taxon>
        <taxon>Betaproteobacteria</taxon>
        <taxon>Burkholderiales</taxon>
        <taxon>Comamonadaceae</taxon>
        <taxon>Verminephrobacter</taxon>
    </lineage>
</organism>
<sequence length="242" mass="26246">MKVKTRSKKVNKAWLDQHVNDPYVQRARKEGYRARAAYKLREIDEQLGLIRPGYTVVDLGATPGAWSQYLRRRMAAEGAIIALDILPMEPLEGVTCLHGDFRAPDVQQRLEQALAGRVVDVVVSDMAPNLSGIACADAARMADLVELAVAFSCRHLKPDGALLVKLFHGSGYSDLAALFKQTFLRVVPLKPKASRDKSSETFLLGRGLKKASPNGLDSRSGTAAEPAPLVPIGTNSMPANGD</sequence>
<reference key="1">
    <citation type="submission" date="2006-12" db="EMBL/GenBank/DDBJ databases">
        <title>Complete sequence of chromosome 1 of Verminephrobacter eiseniae EF01-2.</title>
        <authorList>
            <person name="Copeland A."/>
            <person name="Lucas S."/>
            <person name="Lapidus A."/>
            <person name="Barry K."/>
            <person name="Detter J.C."/>
            <person name="Glavina del Rio T."/>
            <person name="Dalin E."/>
            <person name="Tice H."/>
            <person name="Pitluck S."/>
            <person name="Chertkov O."/>
            <person name="Brettin T."/>
            <person name="Bruce D."/>
            <person name="Han C."/>
            <person name="Tapia R."/>
            <person name="Gilna P."/>
            <person name="Schmutz J."/>
            <person name="Larimer F."/>
            <person name="Land M."/>
            <person name="Hauser L."/>
            <person name="Kyrpides N."/>
            <person name="Kim E."/>
            <person name="Stahl D."/>
            <person name="Richardson P."/>
        </authorList>
    </citation>
    <scope>NUCLEOTIDE SEQUENCE [LARGE SCALE GENOMIC DNA]</scope>
    <source>
        <strain>EF01-2</strain>
    </source>
</reference>
<keyword id="KW-0963">Cytoplasm</keyword>
<keyword id="KW-0489">Methyltransferase</keyword>
<keyword id="KW-1185">Reference proteome</keyword>
<keyword id="KW-0698">rRNA processing</keyword>
<keyword id="KW-0949">S-adenosyl-L-methionine</keyword>
<keyword id="KW-0808">Transferase</keyword>
<name>RLME_VEREI</name>
<evidence type="ECO:0000255" key="1">
    <source>
        <dbReference type="HAMAP-Rule" id="MF_01547"/>
    </source>
</evidence>
<evidence type="ECO:0000256" key="2">
    <source>
        <dbReference type="SAM" id="MobiDB-lite"/>
    </source>
</evidence>